<name>CLD25_HUMAN</name>
<protein>
    <recommendedName>
        <fullName>Claudin-25</fullName>
    </recommendedName>
</protein>
<organism>
    <name type="scientific">Homo sapiens</name>
    <name type="common">Human</name>
    <dbReference type="NCBI Taxonomy" id="9606"/>
    <lineage>
        <taxon>Eukaryota</taxon>
        <taxon>Metazoa</taxon>
        <taxon>Chordata</taxon>
        <taxon>Craniata</taxon>
        <taxon>Vertebrata</taxon>
        <taxon>Euteleostomi</taxon>
        <taxon>Mammalia</taxon>
        <taxon>Eutheria</taxon>
        <taxon>Euarchontoglires</taxon>
        <taxon>Primates</taxon>
        <taxon>Haplorrhini</taxon>
        <taxon>Catarrhini</taxon>
        <taxon>Hominidae</taxon>
        <taxon>Homo</taxon>
    </lineage>
</organism>
<feature type="chain" id="PRO_0000395403" description="Claudin-25">
    <location>
        <begin position="1"/>
        <end position="229"/>
    </location>
</feature>
<feature type="topological domain" description="Cytoplasmic" evidence="2">
    <location>
        <begin position="1"/>
        <end position="10"/>
    </location>
</feature>
<feature type="transmembrane region" description="Helical" evidence="2">
    <location>
        <begin position="11"/>
        <end position="31"/>
    </location>
</feature>
<feature type="topological domain" description="Extracellular" evidence="2">
    <location>
        <begin position="32"/>
        <end position="81"/>
    </location>
</feature>
<feature type="transmembrane region" description="Helical" evidence="2">
    <location>
        <begin position="82"/>
        <end position="102"/>
    </location>
</feature>
<feature type="topological domain" description="Cytoplasmic" evidence="2">
    <location>
        <begin position="103"/>
        <end position="124"/>
    </location>
</feature>
<feature type="transmembrane region" description="Helical" evidence="2">
    <location>
        <begin position="125"/>
        <end position="145"/>
    </location>
</feature>
<feature type="topological domain" description="Extracellular" evidence="2">
    <location>
        <begin position="146"/>
        <end position="164"/>
    </location>
</feature>
<feature type="transmembrane region" description="Helical" evidence="2">
    <location>
        <begin position="165"/>
        <end position="185"/>
    </location>
</feature>
<feature type="topological domain" description="Cytoplasmic" evidence="2">
    <location>
        <begin position="186"/>
        <end position="229"/>
    </location>
</feature>
<feature type="sequence variant" id="VAR_063401" description="In dbSNP:rs35111413.">
    <original>H</original>
    <variation>Y</variation>
    <location>
        <position position="219"/>
    </location>
</feature>
<sequence length="229" mass="25394">MAWSFRAKVQLGGLLLSLLGWVCSCVTTILPQWKTLNLELNEMETWIMGIWEVCVDREEVATVCKAFESFLSLPQELQVARILMVASHGLGLLGLLLCSFGSECFQFHRIRWVFKRRLGLLGRTLEASASATTLLPVSWVAHATIQDFWDDSIPDIIPRWEFGGALYLGWAAGIFLALGGLLLIFSACLGKEDVPFPLMAGPTVPLSCAPVEESDGSFHLMLRPRNLVI</sequence>
<gene>
    <name type="primary">CLDN25</name>
</gene>
<evidence type="ECO:0000250" key="1"/>
<evidence type="ECO:0000255" key="2"/>
<evidence type="ECO:0000269" key="3">
    <source>
    </source>
</evidence>
<evidence type="ECO:0000305" key="4"/>
<accession>C9JDP6</accession>
<proteinExistence type="inferred from homology"/>
<reference key="1">
    <citation type="journal article" date="2006" name="Nature">
        <title>Human chromosome 11 DNA sequence and analysis including novel gene identification.</title>
        <authorList>
            <person name="Taylor T.D."/>
            <person name="Noguchi H."/>
            <person name="Totoki Y."/>
            <person name="Toyoda A."/>
            <person name="Kuroki Y."/>
            <person name="Dewar K."/>
            <person name="Lloyd C."/>
            <person name="Itoh T."/>
            <person name="Takeda T."/>
            <person name="Kim D.-W."/>
            <person name="She X."/>
            <person name="Barlow K.F."/>
            <person name="Bloom T."/>
            <person name="Bruford E."/>
            <person name="Chang J.L."/>
            <person name="Cuomo C.A."/>
            <person name="Eichler E."/>
            <person name="FitzGerald M.G."/>
            <person name="Jaffe D.B."/>
            <person name="LaButti K."/>
            <person name="Nicol R."/>
            <person name="Park H.-S."/>
            <person name="Seaman C."/>
            <person name="Sougnez C."/>
            <person name="Yang X."/>
            <person name="Zimmer A.R."/>
            <person name="Zody M.C."/>
            <person name="Birren B.W."/>
            <person name="Nusbaum C."/>
            <person name="Fujiyama A."/>
            <person name="Hattori M."/>
            <person name="Rogers J."/>
            <person name="Lander E.S."/>
            <person name="Sakaki Y."/>
        </authorList>
    </citation>
    <scope>NUCLEOTIDE SEQUENCE [LARGE SCALE GENOMIC DNA]</scope>
</reference>
<reference key="2">
    <citation type="submission" date="2005-07" db="EMBL/GenBank/DDBJ databases">
        <authorList>
            <person name="Mural R.J."/>
            <person name="Istrail S."/>
            <person name="Sutton G.G."/>
            <person name="Florea L."/>
            <person name="Halpern A.L."/>
            <person name="Mobarry C.M."/>
            <person name="Lippert R."/>
            <person name="Walenz B."/>
            <person name="Shatkay H."/>
            <person name="Dew I."/>
            <person name="Miller J.R."/>
            <person name="Flanigan M.J."/>
            <person name="Edwards N.J."/>
            <person name="Bolanos R."/>
            <person name="Fasulo D."/>
            <person name="Halldorsson B.V."/>
            <person name="Hannenhalli S."/>
            <person name="Turner R."/>
            <person name="Yooseph S."/>
            <person name="Lu F."/>
            <person name="Nusskern D.R."/>
            <person name="Shue B.C."/>
            <person name="Zheng X.H."/>
            <person name="Zhong F."/>
            <person name="Delcher A.L."/>
            <person name="Huson D.H."/>
            <person name="Kravitz S.A."/>
            <person name="Mouchard L."/>
            <person name="Reinert K."/>
            <person name="Remington K.A."/>
            <person name="Clark A.G."/>
            <person name="Waterman M.S."/>
            <person name="Eichler E.E."/>
            <person name="Adams M.D."/>
            <person name="Hunkapiller M.W."/>
            <person name="Myers E.W."/>
            <person name="Venter J.C."/>
        </authorList>
    </citation>
    <scope>NUCLEOTIDE SEQUENCE [LARGE SCALE GENOMIC DNA]</scope>
</reference>
<reference key="3">
    <citation type="journal article" date="2019" name="Cell. Mol. Life Sci.">
        <title>Tight junction proteins at the blood-brain barrier: far more than claudin-5.</title>
        <authorList>
            <person name="Berndt P."/>
            <person name="Winkler L."/>
            <person name="Cording J."/>
            <person name="Breitkreuz-Korff O."/>
            <person name="Rex A."/>
            <person name="Dithmer S."/>
            <person name="Rausch V."/>
            <person name="Blasig R."/>
            <person name="Richter M."/>
            <person name="Sporbert A."/>
            <person name="Wolburg H."/>
            <person name="Blasig I.E."/>
            <person name="Haseloff R.F."/>
        </authorList>
    </citation>
    <scope>SUBCELLULAR LOCATION</scope>
</reference>
<keyword id="KW-0965">Cell junction</keyword>
<keyword id="KW-1003">Cell membrane</keyword>
<keyword id="KW-0472">Membrane</keyword>
<keyword id="KW-1185">Reference proteome</keyword>
<keyword id="KW-0796">Tight junction</keyword>
<keyword id="KW-0812">Transmembrane</keyword>
<keyword id="KW-1133">Transmembrane helix</keyword>
<comment type="function">
    <text evidence="1">Plays a major role in tight junction-specific obliteration of the intercellular space, through calcium-independent cell-adhesion activity.</text>
</comment>
<comment type="subcellular location">
    <subcellularLocation>
        <location evidence="3">Cell junction</location>
        <location evidence="3">Tight junction</location>
    </subcellularLocation>
    <subcellularLocation>
        <location evidence="4">Cell membrane</location>
        <topology evidence="2">Multi-pass membrane protein</topology>
    </subcellularLocation>
</comment>
<comment type="similarity">
    <text evidence="4">Belongs to the claudin family.</text>
</comment>
<dbReference type="EMBL" id="AP003170">
    <property type="status" value="NOT_ANNOTATED_CDS"/>
    <property type="molecule type" value="Genomic_DNA"/>
</dbReference>
<dbReference type="EMBL" id="CH471065">
    <property type="protein sequence ID" value="EAW67230.1"/>
    <property type="molecule type" value="Genomic_DNA"/>
</dbReference>
<dbReference type="CCDS" id="CCDS44736.1"/>
<dbReference type="RefSeq" id="NP_001094859.1">
    <property type="nucleotide sequence ID" value="NM_001101389.1"/>
</dbReference>
<dbReference type="SMR" id="C9JDP6"/>
<dbReference type="FunCoup" id="C9JDP6">
    <property type="interactions" value="358"/>
</dbReference>
<dbReference type="STRING" id="9606.ENSP00000396304"/>
<dbReference type="GlyGen" id="C9JDP6">
    <property type="glycosylation" value="1 site"/>
</dbReference>
<dbReference type="BioMuta" id="CLDN25"/>
<dbReference type="PaxDb" id="9606-ENSP00000396304"/>
<dbReference type="Antibodypedia" id="56622">
    <property type="antibodies" value="50 antibodies from 12 providers"/>
</dbReference>
<dbReference type="DNASU" id="644672"/>
<dbReference type="Ensembl" id="ENST00000453129.3">
    <property type="protein sequence ID" value="ENSP00000396304.2"/>
    <property type="gene ID" value="ENSG00000228607.3"/>
</dbReference>
<dbReference type="GeneID" id="644672"/>
<dbReference type="KEGG" id="hsa:644672"/>
<dbReference type="MANE-Select" id="ENST00000453129.3">
    <property type="protein sequence ID" value="ENSP00000396304.2"/>
    <property type="RefSeq nucleotide sequence ID" value="NM_001101389.1"/>
    <property type="RefSeq protein sequence ID" value="NP_001094859.1"/>
</dbReference>
<dbReference type="UCSC" id="uc009yyw.2">
    <property type="organism name" value="human"/>
</dbReference>
<dbReference type="AGR" id="HGNC:37218"/>
<dbReference type="CTD" id="644672"/>
<dbReference type="DisGeNET" id="644672"/>
<dbReference type="GeneCards" id="CLDN25"/>
<dbReference type="HGNC" id="HGNC:37218">
    <property type="gene designation" value="CLDN25"/>
</dbReference>
<dbReference type="HPA" id="ENSG00000228607">
    <property type="expression patterns" value="Not detected"/>
</dbReference>
<dbReference type="MIM" id="620812">
    <property type="type" value="gene"/>
</dbReference>
<dbReference type="neXtProt" id="NX_C9JDP6"/>
<dbReference type="OpenTargets" id="ENSG00000228607"/>
<dbReference type="PharmGKB" id="PA165543379"/>
<dbReference type="VEuPathDB" id="HostDB:ENSG00000228607"/>
<dbReference type="eggNOG" id="ENOG502SNF0">
    <property type="taxonomic scope" value="Eukaryota"/>
</dbReference>
<dbReference type="GeneTree" id="ENSGT00940000163940"/>
<dbReference type="HOGENOM" id="CLU_076370_1_2_1"/>
<dbReference type="InParanoid" id="C9JDP6"/>
<dbReference type="OMA" id="TVQDFWD"/>
<dbReference type="OrthoDB" id="8612291at2759"/>
<dbReference type="PAN-GO" id="C9JDP6">
    <property type="GO annotations" value="4 GO annotations based on evolutionary models"/>
</dbReference>
<dbReference type="PhylomeDB" id="C9JDP6"/>
<dbReference type="TreeFam" id="TF331936"/>
<dbReference type="PathwayCommons" id="C9JDP6"/>
<dbReference type="BioGRID-ORCS" id="644672">
    <property type="hits" value="9 hits in 1138 CRISPR screens"/>
</dbReference>
<dbReference type="GenomeRNAi" id="644672"/>
<dbReference type="Pharos" id="C9JDP6">
    <property type="development level" value="Tdark"/>
</dbReference>
<dbReference type="Proteomes" id="UP000005640">
    <property type="component" value="Chromosome 11"/>
</dbReference>
<dbReference type="RNAct" id="C9JDP6">
    <property type="molecule type" value="protein"/>
</dbReference>
<dbReference type="Bgee" id="ENSG00000228607">
    <property type="expression patterns" value="Expressed in olfactory segment of nasal mucosa and 4 other cell types or tissues"/>
</dbReference>
<dbReference type="GO" id="GO:0005923">
    <property type="term" value="C:bicellular tight junction"/>
    <property type="evidence" value="ECO:0000318"/>
    <property type="project" value="GO_Central"/>
</dbReference>
<dbReference type="GO" id="GO:0005886">
    <property type="term" value="C:plasma membrane"/>
    <property type="evidence" value="ECO:0000318"/>
    <property type="project" value="GO_Central"/>
</dbReference>
<dbReference type="GO" id="GO:0070160">
    <property type="term" value="C:tight junction"/>
    <property type="evidence" value="ECO:0000314"/>
    <property type="project" value="ARUK-UCL"/>
</dbReference>
<dbReference type="GO" id="GO:0005198">
    <property type="term" value="F:structural molecule activity"/>
    <property type="evidence" value="ECO:0007669"/>
    <property type="project" value="InterPro"/>
</dbReference>
<dbReference type="GO" id="GO:0070830">
    <property type="term" value="P:bicellular tight junction assembly"/>
    <property type="evidence" value="ECO:0000318"/>
    <property type="project" value="GO_Central"/>
</dbReference>
<dbReference type="GO" id="GO:0007155">
    <property type="term" value="P:cell adhesion"/>
    <property type="evidence" value="ECO:0000318"/>
    <property type="project" value="GO_Central"/>
</dbReference>
<dbReference type="Gene3D" id="1.20.140.150">
    <property type="match status" value="1"/>
</dbReference>
<dbReference type="InterPro" id="IPR006187">
    <property type="entry name" value="Claudin"/>
</dbReference>
<dbReference type="InterPro" id="IPR004031">
    <property type="entry name" value="PMP22/EMP/MP20/Claudin"/>
</dbReference>
<dbReference type="PANTHER" id="PTHR12002">
    <property type="entry name" value="CLAUDIN"/>
    <property type="match status" value="1"/>
</dbReference>
<dbReference type="Pfam" id="PF00822">
    <property type="entry name" value="PMP22_Claudin"/>
    <property type="match status" value="1"/>
</dbReference>
<dbReference type="PRINTS" id="PR01077">
    <property type="entry name" value="CLAUDIN"/>
</dbReference>